<proteinExistence type="inferred from homology"/>
<feature type="chain" id="PRO_0000173813" description="26S proteasome regulatory subunit rpn-1">
    <location>
        <begin position="1"/>
        <end position="902"/>
    </location>
</feature>
<feature type="repeat" description="PC 1">
    <location>
        <begin position="415"/>
        <end position="448"/>
    </location>
</feature>
<feature type="repeat" description="PC 2">
    <location>
        <begin position="449"/>
        <end position="487"/>
    </location>
</feature>
<feature type="repeat" description="PC 3">
    <location>
        <begin position="488"/>
        <end position="522"/>
    </location>
</feature>
<feature type="repeat" description="PC 4">
    <location>
        <begin position="525"/>
        <end position="559"/>
    </location>
</feature>
<feature type="repeat" description="PC 5">
    <location>
        <begin position="568"/>
        <end position="601"/>
    </location>
</feature>
<feature type="repeat" description="PC 6">
    <location>
        <begin position="645"/>
        <end position="680"/>
    </location>
</feature>
<feature type="repeat" description="PC 7">
    <location>
        <begin position="681"/>
        <end position="715"/>
    </location>
</feature>
<feature type="repeat" description="PC 8">
    <location>
        <begin position="716"/>
        <end position="750"/>
    </location>
</feature>
<feature type="region of interest" description="Disordered" evidence="2">
    <location>
        <begin position="1"/>
        <end position="54"/>
    </location>
</feature>
<feature type="compositionally biased region" description="Basic and acidic residues" evidence="2">
    <location>
        <begin position="1"/>
        <end position="41"/>
    </location>
</feature>
<feature type="compositionally biased region" description="Acidic residues" evidence="2">
    <location>
        <begin position="42"/>
        <end position="52"/>
    </location>
</feature>
<protein>
    <recommendedName>
        <fullName>26S proteasome regulatory subunit rpn-1</fullName>
    </recommendedName>
</protein>
<accession>Q7S8R8</accession>
<name>RPN1_NEUCR</name>
<gene>
    <name type="primary">rpn-1</name>
    <name type="ORF">NCU07721</name>
</gene>
<organism>
    <name type="scientific">Neurospora crassa (strain ATCC 24698 / 74-OR23-1A / CBS 708.71 / DSM 1257 / FGSC 987)</name>
    <dbReference type="NCBI Taxonomy" id="367110"/>
    <lineage>
        <taxon>Eukaryota</taxon>
        <taxon>Fungi</taxon>
        <taxon>Dikarya</taxon>
        <taxon>Ascomycota</taxon>
        <taxon>Pezizomycotina</taxon>
        <taxon>Sordariomycetes</taxon>
        <taxon>Sordariomycetidae</taxon>
        <taxon>Sordariales</taxon>
        <taxon>Sordariaceae</taxon>
        <taxon>Neurospora</taxon>
    </lineage>
</organism>
<evidence type="ECO:0000250" key="1"/>
<evidence type="ECO:0000256" key="2">
    <source>
        <dbReference type="SAM" id="MobiDB-lite"/>
    </source>
</evidence>
<evidence type="ECO:0000305" key="3"/>
<sequence length="902" mass="100251">MAQESDLSKTADKGKGKAVDDEKKHQDVDGKTPANGKKEEEQNASEELSEEDQQLKSELEMLVERLTESDATLYKPALEAMKNSIKTSTSSMTAVPKPLKFLRPHYETMTKLYDEWPAGDDKSSLADVLSVIGMTYSDEDRQDTLKYRLLSPTQDIGSWGHEYVRHLALEIGEVYAKRIANDEPTQELVDLALVLVPLFLKSNAEADAVDLMSELEIIEELPKFLDENTYSRVCLYMVSMVNLLTYPDNETFLRVAHSIYKKYNQHTQAMVLAIRLNDLGLIEKDFEAADEDPALRKQLAFLIARQGIPLEFERSNDDDEKIYECLSNQKLSEYFKSLGKELNILEPKTTEDIYKSHLESSRVAGMTNFDSARHNLAAGFVNAFVNAGFGSDKMMLVGKDKDSWVWKTKDEGMMSTVASLGTLLLWDVENGLDHVDKYTYLEEEQIQAGAYLAIGIMNTNVRTDSEPAMALLADPDKLAHKNPLIRVATIMGLGLAYAGSCKEELLSFLVNIISDPEESMQVSAMAALACGMIFVGSSNSEVSEAIVTTLLDEESGSRLNDKWSRFLALGLGLLYFGRQEQVDVILETLKAVEHPMAKPTAVLAEICAWAGTGAVLKIQELLHICNEHIEDGEEKKGEELLQAYAVLGIGLIAMGEDVGQEMVLRHFGHLMHYGEANIRRAVPLAMGLISPSNPQMKVYDTLSRYSHDNDNEVAINAIFAMGLLGAGTNNARLAQLLRQLASYYHRDQESLFMVRIAQGLLHMGKGTLSVSPFHTDRQVLSNVATAGLLAVLVAMIDAKQFITSKSHYLLYWIVTAMHPRMLVTLDEDLKPLTVNVRVGQAVDVVGQAGRPKTITGWQTQSTPVLLGYGERAELEDDQYISLSSTLEGLVILRKNPDWEGEK</sequence>
<dbReference type="EMBL" id="CM002239">
    <property type="protein sequence ID" value="EAA32735.2"/>
    <property type="molecule type" value="Genomic_DNA"/>
</dbReference>
<dbReference type="RefSeq" id="XP_961971.2">
    <property type="nucleotide sequence ID" value="XM_956878.3"/>
</dbReference>
<dbReference type="SMR" id="Q7S8R8"/>
<dbReference type="FunCoup" id="Q7S8R8">
    <property type="interactions" value="1459"/>
</dbReference>
<dbReference type="STRING" id="367110.Q7S8R8"/>
<dbReference type="PaxDb" id="5141-EFNCRP00000008058"/>
<dbReference type="EnsemblFungi" id="EAA32735">
    <property type="protein sequence ID" value="EAA32735"/>
    <property type="gene ID" value="NCU07721"/>
</dbReference>
<dbReference type="GeneID" id="3878119"/>
<dbReference type="KEGG" id="ncr:NCU07721"/>
<dbReference type="VEuPathDB" id="FungiDB:NCU07721"/>
<dbReference type="HOGENOM" id="CLU_008705_1_0_1"/>
<dbReference type="InParanoid" id="Q7S8R8"/>
<dbReference type="OMA" id="GTCNGDI"/>
<dbReference type="OrthoDB" id="10252509at2759"/>
<dbReference type="Proteomes" id="UP000001805">
    <property type="component" value="Chromosome 4, Linkage Group IV"/>
</dbReference>
<dbReference type="GO" id="GO:1905754">
    <property type="term" value="C:ascospore-type prospore nucleus"/>
    <property type="evidence" value="ECO:0007669"/>
    <property type="project" value="EnsemblFungi"/>
</dbReference>
<dbReference type="GO" id="GO:0034399">
    <property type="term" value="C:nuclear periphery"/>
    <property type="evidence" value="ECO:0007669"/>
    <property type="project" value="EnsemblFungi"/>
</dbReference>
<dbReference type="GO" id="GO:0005634">
    <property type="term" value="C:nucleus"/>
    <property type="evidence" value="ECO:0000318"/>
    <property type="project" value="GO_Central"/>
</dbReference>
<dbReference type="GO" id="GO:0008540">
    <property type="term" value="C:proteasome regulatory particle, base subcomplex"/>
    <property type="evidence" value="ECO:0000318"/>
    <property type="project" value="GO_Central"/>
</dbReference>
<dbReference type="GO" id="GO:0034515">
    <property type="term" value="C:proteasome storage granule"/>
    <property type="evidence" value="ECO:0000318"/>
    <property type="project" value="GO_Central"/>
</dbReference>
<dbReference type="GO" id="GO:0030234">
    <property type="term" value="F:enzyme regulator activity"/>
    <property type="evidence" value="ECO:0007669"/>
    <property type="project" value="InterPro"/>
</dbReference>
<dbReference type="GO" id="GO:0030674">
    <property type="term" value="F:protein-macromolecule adaptor activity"/>
    <property type="evidence" value="ECO:0007669"/>
    <property type="project" value="EnsemblFungi"/>
</dbReference>
<dbReference type="GO" id="GO:0043161">
    <property type="term" value="P:proteasome-mediated ubiquitin-dependent protein catabolic process"/>
    <property type="evidence" value="ECO:0000318"/>
    <property type="project" value="GO_Central"/>
</dbReference>
<dbReference type="GO" id="GO:0042176">
    <property type="term" value="P:regulation of protein catabolic process"/>
    <property type="evidence" value="ECO:0007669"/>
    <property type="project" value="InterPro"/>
</dbReference>
<dbReference type="FunFam" id="1.25.10.10:FF:000026">
    <property type="entry name" value="26S proteasome non-ATPase regulatory subunit 2"/>
    <property type="match status" value="1"/>
</dbReference>
<dbReference type="Gene3D" id="1.25.10.10">
    <property type="entry name" value="Leucine-rich Repeat Variant"/>
    <property type="match status" value="1"/>
</dbReference>
<dbReference type="InterPro" id="IPR016643">
    <property type="entry name" value="26S_Psome_Rpn1"/>
</dbReference>
<dbReference type="InterPro" id="IPR011989">
    <property type="entry name" value="ARM-like"/>
</dbReference>
<dbReference type="InterPro" id="IPR016024">
    <property type="entry name" value="ARM-type_fold"/>
</dbReference>
<dbReference type="InterPro" id="IPR002015">
    <property type="entry name" value="Proteasome/cyclosome_rpt"/>
</dbReference>
<dbReference type="InterPro" id="IPR041433">
    <property type="entry name" value="RPN1_C"/>
</dbReference>
<dbReference type="InterPro" id="IPR040892">
    <property type="entry name" value="RPN1_N"/>
</dbReference>
<dbReference type="PANTHER" id="PTHR10943">
    <property type="entry name" value="26S PROTEASOME NON-ATPASE REGULATORY SUBUNIT"/>
    <property type="match status" value="1"/>
</dbReference>
<dbReference type="PANTHER" id="PTHR10943:SF1">
    <property type="entry name" value="26S PROTEASOME NON-ATPASE REGULATORY SUBUNIT 2"/>
    <property type="match status" value="1"/>
</dbReference>
<dbReference type="Pfam" id="PF01851">
    <property type="entry name" value="PC_rep"/>
    <property type="match status" value="2"/>
</dbReference>
<dbReference type="Pfam" id="PF18051">
    <property type="entry name" value="RPN1_C"/>
    <property type="match status" value="1"/>
</dbReference>
<dbReference type="Pfam" id="PF17781">
    <property type="entry name" value="RPN1_RPN2_N"/>
    <property type="match status" value="1"/>
</dbReference>
<dbReference type="PIRSF" id="PIRSF015965">
    <property type="entry name" value="26S_Psome_Rpn1"/>
    <property type="match status" value="1"/>
</dbReference>
<dbReference type="SUPFAM" id="SSF48371">
    <property type="entry name" value="ARM repeat"/>
    <property type="match status" value="1"/>
</dbReference>
<keyword id="KW-0647">Proteasome</keyword>
<keyword id="KW-1185">Reference proteome</keyword>
<keyword id="KW-0677">Repeat</keyword>
<comment type="function">
    <text evidence="1">Acts as a regulatory subunit of the 26 proteasome which is involved in the ATP-dependent degradation of ubiquitinated proteins.</text>
</comment>
<comment type="similarity">
    <text evidence="3">Belongs to the proteasome subunit S2 family.</text>
</comment>
<reference key="1">
    <citation type="journal article" date="2003" name="Nature">
        <title>The genome sequence of the filamentous fungus Neurospora crassa.</title>
        <authorList>
            <person name="Galagan J.E."/>
            <person name="Calvo S.E."/>
            <person name="Borkovich K.A."/>
            <person name="Selker E.U."/>
            <person name="Read N.D."/>
            <person name="Jaffe D.B."/>
            <person name="FitzHugh W."/>
            <person name="Ma L.-J."/>
            <person name="Smirnov S."/>
            <person name="Purcell S."/>
            <person name="Rehman B."/>
            <person name="Elkins T."/>
            <person name="Engels R."/>
            <person name="Wang S."/>
            <person name="Nielsen C.B."/>
            <person name="Butler J."/>
            <person name="Endrizzi M."/>
            <person name="Qui D."/>
            <person name="Ianakiev P."/>
            <person name="Bell-Pedersen D."/>
            <person name="Nelson M.A."/>
            <person name="Werner-Washburne M."/>
            <person name="Selitrennikoff C.P."/>
            <person name="Kinsey J.A."/>
            <person name="Braun E.L."/>
            <person name="Zelter A."/>
            <person name="Schulte U."/>
            <person name="Kothe G.O."/>
            <person name="Jedd G."/>
            <person name="Mewes H.-W."/>
            <person name="Staben C."/>
            <person name="Marcotte E."/>
            <person name="Greenberg D."/>
            <person name="Roy A."/>
            <person name="Foley K."/>
            <person name="Naylor J."/>
            <person name="Stange-Thomann N."/>
            <person name="Barrett R."/>
            <person name="Gnerre S."/>
            <person name="Kamal M."/>
            <person name="Kamvysselis M."/>
            <person name="Mauceli E.W."/>
            <person name="Bielke C."/>
            <person name="Rudd S."/>
            <person name="Frishman D."/>
            <person name="Krystofova S."/>
            <person name="Rasmussen C."/>
            <person name="Metzenberg R.L."/>
            <person name="Perkins D.D."/>
            <person name="Kroken S."/>
            <person name="Cogoni C."/>
            <person name="Macino G."/>
            <person name="Catcheside D.E.A."/>
            <person name="Li W."/>
            <person name="Pratt R.J."/>
            <person name="Osmani S.A."/>
            <person name="DeSouza C.P.C."/>
            <person name="Glass N.L."/>
            <person name="Orbach M.J."/>
            <person name="Berglund J.A."/>
            <person name="Voelker R."/>
            <person name="Yarden O."/>
            <person name="Plamann M."/>
            <person name="Seiler S."/>
            <person name="Dunlap J.C."/>
            <person name="Radford A."/>
            <person name="Aramayo R."/>
            <person name="Natvig D.O."/>
            <person name="Alex L.A."/>
            <person name="Mannhaupt G."/>
            <person name="Ebbole D.J."/>
            <person name="Freitag M."/>
            <person name="Paulsen I."/>
            <person name="Sachs M.S."/>
            <person name="Lander E.S."/>
            <person name="Nusbaum C."/>
            <person name="Birren B.W."/>
        </authorList>
    </citation>
    <scope>NUCLEOTIDE SEQUENCE [LARGE SCALE GENOMIC DNA]</scope>
    <source>
        <strain>ATCC 24698 / 74-OR23-1A / CBS 708.71 / DSM 1257 / FGSC 987</strain>
    </source>
</reference>